<geneLocation type="chloroplast"/>
<gene>
    <name type="primary">rps19</name>
</gene>
<protein>
    <recommendedName>
        <fullName evidence="4">Small ribosomal subunit protein uS19c</fullName>
    </recommendedName>
    <alternativeName>
        <fullName>30S ribosomal protein S19, chloroplastic</fullName>
    </alternativeName>
</protein>
<dbReference type="EMBL" id="AB086179">
    <property type="protein sequence ID" value="BAC55390.1"/>
    <property type="molecule type" value="Genomic_DNA"/>
</dbReference>
<dbReference type="EMBL" id="AB087472">
    <property type="protein sequence ID" value="BAC55489.1"/>
    <property type="molecule type" value="mRNA"/>
</dbReference>
<dbReference type="RefSeq" id="NP_777454.1">
    <property type="nucleotide sequence ID" value="NC_004543.1"/>
</dbReference>
<dbReference type="SMR" id="Q85BX6"/>
<dbReference type="GeneID" id="2553431"/>
<dbReference type="GO" id="GO:0009507">
    <property type="term" value="C:chloroplast"/>
    <property type="evidence" value="ECO:0007669"/>
    <property type="project" value="UniProtKB-SubCell"/>
</dbReference>
<dbReference type="GO" id="GO:0005763">
    <property type="term" value="C:mitochondrial small ribosomal subunit"/>
    <property type="evidence" value="ECO:0007669"/>
    <property type="project" value="TreeGrafter"/>
</dbReference>
<dbReference type="GO" id="GO:0019843">
    <property type="term" value="F:rRNA binding"/>
    <property type="evidence" value="ECO:0007669"/>
    <property type="project" value="UniProtKB-UniRule"/>
</dbReference>
<dbReference type="GO" id="GO:0003735">
    <property type="term" value="F:structural constituent of ribosome"/>
    <property type="evidence" value="ECO:0007669"/>
    <property type="project" value="InterPro"/>
</dbReference>
<dbReference type="GO" id="GO:0000028">
    <property type="term" value="P:ribosomal small subunit assembly"/>
    <property type="evidence" value="ECO:0007669"/>
    <property type="project" value="TreeGrafter"/>
</dbReference>
<dbReference type="GO" id="GO:0006412">
    <property type="term" value="P:translation"/>
    <property type="evidence" value="ECO:0007669"/>
    <property type="project" value="UniProtKB-UniRule"/>
</dbReference>
<dbReference type="FunFam" id="3.30.860.10:FF:000001">
    <property type="entry name" value="30S ribosomal protein S19"/>
    <property type="match status" value="1"/>
</dbReference>
<dbReference type="Gene3D" id="3.30.860.10">
    <property type="entry name" value="30s Ribosomal Protein S19, Chain A"/>
    <property type="match status" value="1"/>
</dbReference>
<dbReference type="HAMAP" id="MF_00531">
    <property type="entry name" value="Ribosomal_uS19"/>
    <property type="match status" value="1"/>
</dbReference>
<dbReference type="InterPro" id="IPR002222">
    <property type="entry name" value="Ribosomal_uS19"/>
</dbReference>
<dbReference type="InterPro" id="IPR005732">
    <property type="entry name" value="Ribosomal_uS19_bac-type"/>
</dbReference>
<dbReference type="InterPro" id="IPR020934">
    <property type="entry name" value="Ribosomal_uS19_CS"/>
</dbReference>
<dbReference type="InterPro" id="IPR023575">
    <property type="entry name" value="Ribosomal_uS19_SF"/>
</dbReference>
<dbReference type="NCBIfam" id="TIGR01050">
    <property type="entry name" value="rpsS_bact"/>
    <property type="match status" value="1"/>
</dbReference>
<dbReference type="PANTHER" id="PTHR11880">
    <property type="entry name" value="RIBOSOMAL PROTEIN S19P FAMILY MEMBER"/>
    <property type="match status" value="1"/>
</dbReference>
<dbReference type="PANTHER" id="PTHR11880:SF8">
    <property type="entry name" value="SMALL RIBOSOMAL SUBUNIT PROTEIN US19M"/>
    <property type="match status" value="1"/>
</dbReference>
<dbReference type="Pfam" id="PF00203">
    <property type="entry name" value="Ribosomal_S19"/>
    <property type="match status" value="1"/>
</dbReference>
<dbReference type="PIRSF" id="PIRSF002144">
    <property type="entry name" value="Ribosomal_S19"/>
    <property type="match status" value="1"/>
</dbReference>
<dbReference type="PRINTS" id="PR00975">
    <property type="entry name" value="RIBOSOMALS19"/>
</dbReference>
<dbReference type="SUPFAM" id="SSF54570">
    <property type="entry name" value="Ribosomal protein S19"/>
    <property type="match status" value="1"/>
</dbReference>
<dbReference type="PROSITE" id="PS00323">
    <property type="entry name" value="RIBOSOMAL_S19"/>
    <property type="match status" value="1"/>
</dbReference>
<organism>
    <name type="scientific">Anthoceros angustus</name>
    <name type="common">Hornwort</name>
    <name type="synonym">Anthoceros formosae</name>
    <dbReference type="NCBI Taxonomy" id="48387"/>
    <lineage>
        <taxon>Eukaryota</taxon>
        <taxon>Viridiplantae</taxon>
        <taxon>Streptophyta</taxon>
        <taxon>Embryophyta</taxon>
        <taxon>Anthocerotophyta</taxon>
        <taxon>Anthocerotopsida</taxon>
        <taxon>Anthocerotidae</taxon>
        <taxon>Anthocerotales</taxon>
        <taxon>Anthocerotaceae</taxon>
        <taxon>Anthoceros</taxon>
    </lineage>
</organism>
<comment type="function">
    <text evidence="1">Protein S19 forms a complex with S13 that binds strongly to the 16S ribosomal RNA.</text>
</comment>
<comment type="subcellular location">
    <subcellularLocation>
        <location>Plastid</location>
        <location>Chloroplast</location>
    </subcellularLocation>
</comment>
<comment type="RNA editing">
    <location>
        <position position="15" evidence="2 3"/>
    </location>
</comment>
<comment type="similarity">
    <text evidence="4">Belongs to the universal ribosomal protein uS19 family.</text>
</comment>
<evidence type="ECO:0000250" key="1"/>
<evidence type="ECO:0000269" key="2">
    <source>
    </source>
</evidence>
<evidence type="ECO:0000269" key="3">
    <source>
    </source>
</evidence>
<evidence type="ECO:0000305" key="4"/>
<name>RR19_ANTAG</name>
<reference key="1">
    <citation type="journal article" date="2003" name="Nucleic Acids Res.">
        <title>The complete nucleotide sequence of the hornwort (Anthoceros formosae) chloroplast genome: insight into the earliest land plants.</title>
        <authorList>
            <person name="Kugita M."/>
            <person name="Kaneko A."/>
            <person name="Yamamoto Y."/>
            <person name="Takeya Y."/>
            <person name="Matsumoto T."/>
            <person name="Yoshinaga K."/>
        </authorList>
    </citation>
    <scope>NUCLEOTIDE SEQUENCE [LARGE SCALE GENOMIC DNA]</scope>
    <scope>RNA EDITING</scope>
</reference>
<reference key="2">
    <citation type="journal article" date="2003" name="Nucleic Acids Res.">
        <title>RNA editing in hornwort chloroplasts makes more than half the genes functional.</title>
        <authorList>
            <person name="Kugita M."/>
            <person name="Yamamoto Y."/>
            <person name="Fujikawa T."/>
            <person name="Matsumoto T."/>
            <person name="Yoshinaga K."/>
        </authorList>
    </citation>
    <scope>NUCLEOTIDE SEQUENCE [MRNA]</scope>
    <scope>RNA EDITING</scope>
    <source>
        <tissue>Thallus</tissue>
    </source>
</reference>
<proteinExistence type="evidence at transcript level"/>
<feature type="chain" id="PRO_0000129952" description="Small ribosomal subunit protein uS19c">
    <location>
        <begin position="1"/>
        <end position="92"/>
    </location>
</feature>
<keyword id="KW-0150">Chloroplast</keyword>
<keyword id="KW-0934">Plastid</keyword>
<keyword id="KW-0687">Ribonucleoprotein</keyword>
<keyword id="KW-0689">Ribosomal protein</keyword>
<keyword id="KW-0691">RNA editing</keyword>
<keyword id="KW-0694">RNA-binding</keyword>
<keyword id="KW-0699">rRNA-binding</keyword>
<sequence>MTRLLKKGPFVAYHLLEKIEDLNIKREKKIIVTWSRASTIVPTMIGHTIAVYNGQEHLPIYITDRMVGHKLGEFALTRVFKGHAKSDKKSRR</sequence>
<accession>Q85BX6</accession>